<sequence length="319" mass="33791">MTVIDNHEALAKEGDNGLSEAGARDYFELLKPRVMSLVVFTAFAGLVLAPGHINPVLGLIAILCIAVGAGASGALNMWYDADIDAIMTRTAKRPIPAGRVAPSEALAFGLVLSGFSVTILGLAVNWLSAAILAFTIFFYAVVYTMWLKRSTPQNIVIGGAAGAFPPVIGWACVTGNVTIESVVLFLIIFLWTPAHFWALALFKMGDYEAVGVPMLPNVAGVPTTKNQIVAYAVLTAIIGVVPSFMGFASLGYGVVATVLGVIFVHCSISVWRMPDGDVKMVPAKKLFAFSIFYLFAIFSALLIDRLVAVLMSGGVGGWL</sequence>
<comment type="function">
    <text evidence="1">Converts heme B (protoheme IX) to heme O by substitution of the vinyl group on carbon 2 of heme B porphyrin ring with a hydroxyethyl farnesyl side group.</text>
</comment>
<comment type="catalytic activity">
    <reaction evidence="1">
        <text>heme b + (2E,6E)-farnesyl diphosphate + H2O = Fe(II)-heme o + diphosphate</text>
        <dbReference type="Rhea" id="RHEA:28070"/>
        <dbReference type="ChEBI" id="CHEBI:15377"/>
        <dbReference type="ChEBI" id="CHEBI:33019"/>
        <dbReference type="ChEBI" id="CHEBI:60344"/>
        <dbReference type="ChEBI" id="CHEBI:60530"/>
        <dbReference type="ChEBI" id="CHEBI:175763"/>
        <dbReference type="EC" id="2.5.1.141"/>
    </reaction>
</comment>
<comment type="pathway">
    <text evidence="1">Porphyrin-containing compound metabolism; heme O biosynthesis; heme O from protoheme: step 1/1.</text>
</comment>
<comment type="subcellular location">
    <subcellularLocation>
        <location evidence="1">Cell inner membrane</location>
        <topology evidence="1">Multi-pass membrane protein</topology>
    </subcellularLocation>
</comment>
<comment type="miscellaneous">
    <text evidence="1">Carbon 2 of the heme B porphyrin ring is defined according to the Fischer nomenclature.</text>
</comment>
<comment type="similarity">
    <text evidence="1">Belongs to the UbiA prenyltransferase family. Protoheme IX farnesyltransferase subfamily.</text>
</comment>
<reference key="1">
    <citation type="journal article" date="2009" name="J. Bacteriol.">
        <title>Genome sequences of three Agrobacterium biovars help elucidate the evolution of multichromosome genomes in bacteria.</title>
        <authorList>
            <person name="Slater S.C."/>
            <person name="Goldman B.S."/>
            <person name="Goodner B."/>
            <person name="Setubal J.C."/>
            <person name="Farrand S.K."/>
            <person name="Nester E.W."/>
            <person name="Burr T.J."/>
            <person name="Banta L."/>
            <person name="Dickerman A.W."/>
            <person name="Paulsen I."/>
            <person name="Otten L."/>
            <person name="Suen G."/>
            <person name="Welch R."/>
            <person name="Almeida N.F."/>
            <person name="Arnold F."/>
            <person name="Burton O.T."/>
            <person name="Du Z."/>
            <person name="Ewing A."/>
            <person name="Godsy E."/>
            <person name="Heisel S."/>
            <person name="Houmiel K.L."/>
            <person name="Jhaveri J."/>
            <person name="Lu J."/>
            <person name="Miller N.M."/>
            <person name="Norton S."/>
            <person name="Chen Q."/>
            <person name="Phoolcharoen W."/>
            <person name="Ohlin V."/>
            <person name="Ondrusek D."/>
            <person name="Pride N."/>
            <person name="Stricklin S.L."/>
            <person name="Sun J."/>
            <person name="Wheeler C."/>
            <person name="Wilson L."/>
            <person name="Zhu H."/>
            <person name="Wood D.W."/>
        </authorList>
    </citation>
    <scope>NUCLEOTIDE SEQUENCE [LARGE SCALE GENOMIC DNA]</scope>
    <source>
        <strain>K84 / ATCC BAA-868</strain>
    </source>
</reference>
<protein>
    <recommendedName>
        <fullName evidence="1">Protoheme IX farnesyltransferase</fullName>
        <ecNumber evidence="1">2.5.1.141</ecNumber>
    </recommendedName>
    <alternativeName>
        <fullName evidence="1">Heme B farnesyltransferase</fullName>
    </alternativeName>
    <alternativeName>
        <fullName evidence="1">Heme O synthase</fullName>
    </alternativeName>
</protein>
<feature type="chain" id="PRO_1000199634" description="Protoheme IX farnesyltransferase">
    <location>
        <begin position="1"/>
        <end position="319"/>
    </location>
</feature>
<feature type="transmembrane region" description="Helical" evidence="1">
    <location>
        <begin position="34"/>
        <end position="54"/>
    </location>
</feature>
<feature type="transmembrane region" description="Helical" evidence="1">
    <location>
        <begin position="55"/>
        <end position="75"/>
    </location>
</feature>
<feature type="transmembrane region" description="Helical" evidence="1">
    <location>
        <begin position="95"/>
        <end position="115"/>
    </location>
</feature>
<feature type="transmembrane region" description="Helical" evidence="1">
    <location>
        <begin position="119"/>
        <end position="139"/>
    </location>
</feature>
<feature type="transmembrane region" description="Helical" evidence="1">
    <location>
        <begin position="155"/>
        <end position="175"/>
    </location>
</feature>
<feature type="transmembrane region" description="Helical" evidence="1">
    <location>
        <begin position="182"/>
        <end position="202"/>
    </location>
</feature>
<feature type="transmembrane region" description="Helical" evidence="1">
    <location>
        <begin position="221"/>
        <end position="241"/>
    </location>
</feature>
<feature type="transmembrane region" description="Helical" evidence="1">
    <location>
        <begin position="244"/>
        <end position="264"/>
    </location>
</feature>
<feature type="transmembrane region" description="Helical" evidence="1">
    <location>
        <begin position="291"/>
        <end position="311"/>
    </location>
</feature>
<organism>
    <name type="scientific">Rhizobium rhizogenes (strain K84 / ATCC BAA-868)</name>
    <name type="common">Agrobacterium radiobacter</name>
    <dbReference type="NCBI Taxonomy" id="311403"/>
    <lineage>
        <taxon>Bacteria</taxon>
        <taxon>Pseudomonadati</taxon>
        <taxon>Pseudomonadota</taxon>
        <taxon>Alphaproteobacteria</taxon>
        <taxon>Hyphomicrobiales</taxon>
        <taxon>Rhizobiaceae</taxon>
        <taxon>Rhizobium/Agrobacterium group</taxon>
        <taxon>Rhizobium</taxon>
    </lineage>
</organism>
<evidence type="ECO:0000255" key="1">
    <source>
        <dbReference type="HAMAP-Rule" id="MF_00154"/>
    </source>
</evidence>
<gene>
    <name evidence="1" type="primary">ctaB</name>
    <name type="ordered locus">Arad_1229</name>
</gene>
<keyword id="KW-0997">Cell inner membrane</keyword>
<keyword id="KW-1003">Cell membrane</keyword>
<keyword id="KW-0350">Heme biosynthesis</keyword>
<keyword id="KW-0472">Membrane</keyword>
<keyword id="KW-0808">Transferase</keyword>
<keyword id="KW-0812">Transmembrane</keyword>
<keyword id="KW-1133">Transmembrane helix</keyword>
<dbReference type="EC" id="2.5.1.141" evidence="1"/>
<dbReference type="EMBL" id="CP000628">
    <property type="protein sequence ID" value="ACM25724.1"/>
    <property type="molecule type" value="Genomic_DNA"/>
</dbReference>
<dbReference type="RefSeq" id="WP_007693935.1">
    <property type="nucleotide sequence ID" value="NC_011985.1"/>
</dbReference>
<dbReference type="SMR" id="B9JAP1"/>
<dbReference type="STRING" id="311403.Arad_1229"/>
<dbReference type="KEGG" id="ara:Arad_1229"/>
<dbReference type="eggNOG" id="COG0109">
    <property type="taxonomic scope" value="Bacteria"/>
</dbReference>
<dbReference type="HOGENOM" id="CLU_029631_0_2_5"/>
<dbReference type="UniPathway" id="UPA00834">
    <property type="reaction ID" value="UER00712"/>
</dbReference>
<dbReference type="Proteomes" id="UP000001600">
    <property type="component" value="Chromosome 1"/>
</dbReference>
<dbReference type="GO" id="GO:0005886">
    <property type="term" value="C:plasma membrane"/>
    <property type="evidence" value="ECO:0007669"/>
    <property type="project" value="UniProtKB-SubCell"/>
</dbReference>
<dbReference type="GO" id="GO:0008495">
    <property type="term" value="F:protoheme IX farnesyltransferase activity"/>
    <property type="evidence" value="ECO:0007669"/>
    <property type="project" value="UniProtKB-UniRule"/>
</dbReference>
<dbReference type="GO" id="GO:0048034">
    <property type="term" value="P:heme O biosynthetic process"/>
    <property type="evidence" value="ECO:0007669"/>
    <property type="project" value="UniProtKB-UniRule"/>
</dbReference>
<dbReference type="CDD" id="cd13957">
    <property type="entry name" value="PT_UbiA_Cox10"/>
    <property type="match status" value="1"/>
</dbReference>
<dbReference type="Gene3D" id="1.10.357.140">
    <property type="entry name" value="UbiA prenyltransferase"/>
    <property type="match status" value="1"/>
</dbReference>
<dbReference type="HAMAP" id="MF_00154">
    <property type="entry name" value="CyoE_CtaB"/>
    <property type="match status" value="1"/>
</dbReference>
<dbReference type="InterPro" id="IPR006369">
    <property type="entry name" value="Protohaem_IX_farnesylTrfase"/>
</dbReference>
<dbReference type="InterPro" id="IPR000537">
    <property type="entry name" value="UbiA_prenyltransferase"/>
</dbReference>
<dbReference type="InterPro" id="IPR030470">
    <property type="entry name" value="UbiA_prenylTrfase_CS"/>
</dbReference>
<dbReference type="InterPro" id="IPR044878">
    <property type="entry name" value="UbiA_sf"/>
</dbReference>
<dbReference type="NCBIfam" id="TIGR01473">
    <property type="entry name" value="cyoE_ctaB"/>
    <property type="match status" value="1"/>
</dbReference>
<dbReference type="NCBIfam" id="NF003349">
    <property type="entry name" value="PRK04375.1-2"/>
    <property type="match status" value="1"/>
</dbReference>
<dbReference type="PANTHER" id="PTHR43448:SF7">
    <property type="entry name" value="4-HYDROXYBENZOATE SOLANESYLTRANSFERASE"/>
    <property type="match status" value="1"/>
</dbReference>
<dbReference type="PANTHER" id="PTHR43448">
    <property type="entry name" value="PROTOHEME IX FARNESYLTRANSFERASE, MITOCHONDRIAL"/>
    <property type="match status" value="1"/>
</dbReference>
<dbReference type="Pfam" id="PF01040">
    <property type="entry name" value="UbiA"/>
    <property type="match status" value="1"/>
</dbReference>
<dbReference type="PROSITE" id="PS00943">
    <property type="entry name" value="UBIA"/>
    <property type="match status" value="1"/>
</dbReference>
<proteinExistence type="inferred from homology"/>
<accession>B9JAP1</accession>
<name>COXX_RHIR8</name>